<keyword id="KW-0150">Chloroplast</keyword>
<keyword id="KW-0934">Plastid</keyword>
<keyword id="KW-0687">Ribonucleoprotein</keyword>
<keyword id="KW-0689">Ribosomal protein</keyword>
<gene>
    <name type="primary">rps15</name>
</gene>
<proteinExistence type="inferred from homology"/>
<geneLocation type="chloroplast"/>
<reference key="1">
    <citation type="journal article" date="2007" name="Mol. Phylogenet. Evol.">
        <title>Phylogenetic and evolutionary implications of complete chloroplast genome sequences of four early-diverging angiosperms: Buxus (Buxaceae), Chloranthus (Chloranthaceae), Dioscorea (Dioscoreaceae), and Illicium (Schisandraceae).</title>
        <authorList>
            <person name="Hansen D.R."/>
            <person name="Dastidar S.G."/>
            <person name="Cai Z."/>
            <person name="Penaflor C."/>
            <person name="Kuehl J.V."/>
            <person name="Boore J.L."/>
            <person name="Jansen R.K."/>
        </authorList>
    </citation>
    <scope>NUCLEOTIDE SEQUENCE [LARGE SCALE GENOMIC DNA]</scope>
</reference>
<organism>
    <name type="scientific">Dioscorea elephantipes</name>
    <name type="common">Elephant's foot yam</name>
    <name type="synonym">Testudinaria elephantipes</name>
    <dbReference type="NCBI Taxonomy" id="145284"/>
    <lineage>
        <taxon>Eukaryota</taxon>
        <taxon>Viridiplantae</taxon>
        <taxon>Streptophyta</taxon>
        <taxon>Embryophyta</taxon>
        <taxon>Tracheophyta</taxon>
        <taxon>Spermatophyta</taxon>
        <taxon>Magnoliopsida</taxon>
        <taxon>Liliopsida</taxon>
        <taxon>Dioscoreales</taxon>
        <taxon>Dioscoreaceae</taxon>
        <taxon>Dioscorea</taxon>
    </lineage>
</organism>
<feature type="chain" id="PRO_0000354255" description="Small ribosomal subunit protein uS15c">
    <location>
        <begin position="1"/>
        <end position="90"/>
    </location>
</feature>
<evidence type="ECO:0000250" key="1"/>
<evidence type="ECO:0000305" key="2"/>
<sequence length="90" mass="10834">MIKNSFISVIPQEEKEENKGSVEFQVFSFTNKIRRLTSHLELHKKDFLSQRGLRKILGKRQRLLTYLLKKNRVRYKKLIGQLDIREPKIH</sequence>
<dbReference type="EMBL" id="EF380353">
    <property type="protein sequence ID" value="ABR01478.1"/>
    <property type="molecule type" value="Genomic_DNA"/>
</dbReference>
<dbReference type="RefSeq" id="YP_001294401.1">
    <property type="nucleotide sequence ID" value="NC_009601.1"/>
</dbReference>
<dbReference type="SMR" id="A6MMQ6"/>
<dbReference type="GeneID" id="5236673"/>
<dbReference type="GO" id="GO:0009507">
    <property type="term" value="C:chloroplast"/>
    <property type="evidence" value="ECO:0007669"/>
    <property type="project" value="UniProtKB-SubCell"/>
</dbReference>
<dbReference type="GO" id="GO:1990904">
    <property type="term" value="C:ribonucleoprotein complex"/>
    <property type="evidence" value="ECO:0007669"/>
    <property type="project" value="UniProtKB-KW"/>
</dbReference>
<dbReference type="GO" id="GO:0005840">
    <property type="term" value="C:ribosome"/>
    <property type="evidence" value="ECO:0007669"/>
    <property type="project" value="UniProtKB-KW"/>
</dbReference>
<dbReference type="GO" id="GO:0003735">
    <property type="term" value="F:structural constituent of ribosome"/>
    <property type="evidence" value="ECO:0007669"/>
    <property type="project" value="InterPro"/>
</dbReference>
<dbReference type="GO" id="GO:0006412">
    <property type="term" value="P:translation"/>
    <property type="evidence" value="ECO:0007669"/>
    <property type="project" value="UniProtKB-UniRule"/>
</dbReference>
<dbReference type="CDD" id="cd00353">
    <property type="entry name" value="Ribosomal_S15p_S13e"/>
    <property type="match status" value="1"/>
</dbReference>
<dbReference type="Gene3D" id="1.10.287.10">
    <property type="entry name" value="S15/NS1, RNA-binding"/>
    <property type="match status" value="1"/>
</dbReference>
<dbReference type="HAMAP" id="MF_01343_B">
    <property type="entry name" value="Ribosomal_uS15_B"/>
    <property type="match status" value="1"/>
</dbReference>
<dbReference type="InterPro" id="IPR000589">
    <property type="entry name" value="Ribosomal_uS15"/>
</dbReference>
<dbReference type="InterPro" id="IPR005290">
    <property type="entry name" value="Ribosomal_uS15_bac-type"/>
</dbReference>
<dbReference type="InterPro" id="IPR009068">
    <property type="entry name" value="uS15_NS1_RNA-bd_sf"/>
</dbReference>
<dbReference type="NCBIfam" id="TIGR00952">
    <property type="entry name" value="S15_bact"/>
    <property type="match status" value="1"/>
</dbReference>
<dbReference type="PANTHER" id="PTHR23321">
    <property type="entry name" value="RIBOSOMAL PROTEIN S15, BACTERIAL AND ORGANELLAR"/>
    <property type="match status" value="1"/>
</dbReference>
<dbReference type="PANTHER" id="PTHR23321:SF26">
    <property type="entry name" value="SMALL RIBOSOMAL SUBUNIT PROTEIN US15M"/>
    <property type="match status" value="1"/>
</dbReference>
<dbReference type="Pfam" id="PF00312">
    <property type="entry name" value="Ribosomal_S15"/>
    <property type="match status" value="1"/>
</dbReference>
<dbReference type="SMART" id="SM01387">
    <property type="entry name" value="Ribosomal_S15"/>
    <property type="match status" value="1"/>
</dbReference>
<dbReference type="SUPFAM" id="SSF47060">
    <property type="entry name" value="S15/NS1 RNA-binding domain"/>
    <property type="match status" value="1"/>
</dbReference>
<dbReference type="PROSITE" id="PS00362">
    <property type="entry name" value="RIBOSOMAL_S15"/>
    <property type="match status" value="1"/>
</dbReference>
<name>RR15_DIOEL</name>
<protein>
    <recommendedName>
        <fullName evidence="2">Small ribosomal subunit protein uS15c</fullName>
    </recommendedName>
    <alternativeName>
        <fullName>30S ribosomal protein S15, chloroplastic</fullName>
    </alternativeName>
</protein>
<accession>A6MMQ6</accession>
<comment type="subunit">
    <text evidence="1">Part of the 30S ribosomal subunit.</text>
</comment>
<comment type="subcellular location">
    <subcellularLocation>
        <location>Plastid</location>
        <location>Chloroplast</location>
    </subcellularLocation>
</comment>
<comment type="similarity">
    <text evidence="2">Belongs to the universal ribosomal protein uS15 family.</text>
</comment>